<dbReference type="EMBL" id="BT029886">
    <property type="protein sequence ID" value="ABM06136.1"/>
    <property type="molecule type" value="mRNA"/>
</dbReference>
<dbReference type="EMBL" id="BC108143">
    <property type="protein sequence ID" value="AAI08144.1"/>
    <property type="molecule type" value="mRNA"/>
</dbReference>
<dbReference type="EMBL" id="BC142102">
    <property type="protein sequence ID" value="AAI42103.1"/>
    <property type="molecule type" value="mRNA"/>
</dbReference>
<dbReference type="PIR" id="A02605">
    <property type="entry name" value="HSBO22"/>
</dbReference>
<dbReference type="RefSeq" id="NP_001032546.1">
    <property type="nucleotide sequence ID" value="NM_001037469.2"/>
</dbReference>
<dbReference type="RefSeq" id="XP_002686101.1">
    <property type="nucleotide sequence ID" value="XM_002686055.5"/>
</dbReference>
<dbReference type="RefSeq" id="XP_002697553.1">
    <property type="nucleotide sequence ID" value="XM_002697507.6"/>
</dbReference>
<dbReference type="RefSeq" id="XP_002697561.1">
    <property type="nucleotide sequence ID" value="XM_002697515.6"/>
</dbReference>
<dbReference type="RefSeq" id="XP_002702931.1">
    <property type="nucleotide sequence ID" value="XM_002702885.4"/>
</dbReference>
<dbReference type="RefSeq" id="XP_003583950.1">
    <property type="nucleotide sequence ID" value="XM_003583902.4"/>
</dbReference>
<dbReference type="RefSeq" id="XP_003587771.1">
    <property type="nucleotide sequence ID" value="XM_003587723.4"/>
</dbReference>
<dbReference type="RefSeq" id="XP_010816749.1">
    <property type="nucleotide sequence ID" value="XM_010818447.2"/>
</dbReference>
<dbReference type="RefSeq" id="XP_010816750.1">
    <property type="nucleotide sequence ID" value="XM_010818448.1"/>
</dbReference>
<dbReference type="RefSeq" id="XP_010816751.1">
    <property type="nucleotide sequence ID" value="XM_010818449.2"/>
</dbReference>
<dbReference type="RefSeq" id="XP_010816752.1">
    <property type="nucleotide sequence ID" value="XM_010818450.1"/>
</dbReference>
<dbReference type="RefSeq" id="XP_010816754.1">
    <property type="nucleotide sequence ID" value="XM_010818452.2"/>
</dbReference>
<dbReference type="RefSeq" id="XP_010816755.1">
    <property type="nucleotide sequence ID" value="XM_010818453.1"/>
</dbReference>
<dbReference type="RefSeq" id="XP_010816756.1">
    <property type="nucleotide sequence ID" value="XM_010818454.2"/>
</dbReference>
<dbReference type="RefSeq" id="XP_010816757.1">
    <property type="nucleotide sequence ID" value="XM_010818455.1"/>
</dbReference>
<dbReference type="RefSeq" id="XP_010816759.1">
    <property type="nucleotide sequence ID" value="XM_010818457.2"/>
</dbReference>
<dbReference type="RefSeq" id="XP_010816816.1">
    <property type="nucleotide sequence ID" value="XM_010818514.3"/>
</dbReference>
<dbReference type="RefSeq" id="XP_010823688.1">
    <property type="nucleotide sequence ID" value="XM_010825386.2"/>
</dbReference>
<dbReference type="RefSeq" id="XP_010823689.1">
    <property type="nucleotide sequence ID" value="XM_010825387.1"/>
</dbReference>
<dbReference type="RefSeq" id="XP_010823690.1">
    <property type="nucleotide sequence ID" value="XM_010825388.2"/>
</dbReference>
<dbReference type="RefSeq" id="XP_010823691.1">
    <property type="nucleotide sequence ID" value="XM_010825389.1"/>
</dbReference>
<dbReference type="RefSeq" id="XP_010823693.1">
    <property type="nucleotide sequence ID" value="XM_010825391.2"/>
</dbReference>
<dbReference type="RefSeq" id="XP_010823694.1">
    <property type="nucleotide sequence ID" value="XM_010825392.2"/>
</dbReference>
<dbReference type="RefSeq" id="XP_010823695.1">
    <property type="nucleotide sequence ID" value="XM_010825393.2"/>
</dbReference>
<dbReference type="RefSeq" id="XP_010823697.1">
    <property type="nucleotide sequence ID" value="XM_010825395.2"/>
</dbReference>
<dbReference type="RefSeq" id="XP_010823715.1">
    <property type="nucleotide sequence ID" value="XM_010825413.2"/>
</dbReference>
<dbReference type="RefSeq" id="XP_010825135.2">
    <property type="nucleotide sequence ID" value="XM_010826833.2"/>
</dbReference>
<dbReference type="RefSeq" id="XP_015315427.1">
    <property type="nucleotide sequence ID" value="XM_015459941.3"/>
</dbReference>
<dbReference type="RefSeq" id="XP_015324467.1">
    <property type="nucleotide sequence ID" value="XM_015468981.1"/>
</dbReference>
<dbReference type="RefSeq" id="XP_024839707.1">
    <property type="nucleotide sequence ID" value="XM_024983939.2"/>
</dbReference>
<dbReference type="RefSeq" id="XP_024839708.1">
    <property type="nucleotide sequence ID" value="XM_024983940.2"/>
</dbReference>
<dbReference type="RefSeq" id="XP_024845743.1">
    <property type="nucleotide sequence ID" value="XM_024989975.2"/>
</dbReference>
<dbReference type="RefSeq" id="XP_059736716.1">
    <property type="nucleotide sequence ID" value="XM_059880733.1"/>
</dbReference>
<dbReference type="RefSeq" id="XP_059736717.1">
    <property type="nucleotide sequence ID" value="XM_059880734.1"/>
</dbReference>
<dbReference type="RefSeq" id="XP_581429.3">
    <property type="nucleotide sequence ID" value="XM_581429.7"/>
</dbReference>
<dbReference type="RefSeq" id="XP_599845.2">
    <property type="nucleotide sequence ID" value="XM_599845.8"/>
</dbReference>
<dbReference type="SMR" id="P62808"/>
<dbReference type="BioGRID" id="542671">
    <property type="interactions" value="1"/>
</dbReference>
<dbReference type="FunCoup" id="P62808">
    <property type="interactions" value="1271"/>
</dbReference>
<dbReference type="STRING" id="9913.ENSBTAP00000047687"/>
<dbReference type="GlyGen" id="P62808">
    <property type="glycosylation" value="1 site"/>
</dbReference>
<dbReference type="iPTMnet" id="P62808"/>
<dbReference type="PaxDb" id="9913-ENSBTAP00000024155"/>
<dbReference type="PeptideAtlas" id="P62808"/>
<dbReference type="Ensembl" id="ENSBTAT00000027962.6">
    <property type="protein sequence ID" value="ENSBTAP00000092504.1"/>
    <property type="gene ID" value="ENSBTAG00000061064.1"/>
</dbReference>
<dbReference type="Ensembl" id="ENSBTAT00000076064.2">
    <property type="protein sequence ID" value="ENSBTAP00000061736.2"/>
    <property type="gene ID" value="ENSBTAG00000061064.1"/>
</dbReference>
<dbReference type="Ensembl" id="ENSBTAT00000092854.1">
    <property type="protein sequence ID" value="ENSBTAP00000097360.1"/>
    <property type="gene ID" value="ENSBTAG00000069280.1"/>
</dbReference>
<dbReference type="Ensembl" id="ENSBTAT00000109633.1">
    <property type="protein sequence ID" value="ENSBTAP00000080761.1"/>
    <property type="gene ID" value="ENSBTAG00000069280.1"/>
</dbReference>
<dbReference type="Ensembl" id="ENSBTAT00000118505.1">
    <property type="protein sequence ID" value="ENSBTAP00000084105.1"/>
    <property type="gene ID" value="ENSBTAG00000061064.1"/>
</dbReference>
<dbReference type="Ensembl" id="ENSBTAT00000124274.1">
    <property type="protein sequence ID" value="ENSBTAP00000082802.1"/>
    <property type="gene ID" value="ENSBTAG00000069228.1"/>
</dbReference>
<dbReference type="Ensembl" id="ENSBTAT00000127930.1">
    <property type="protein sequence ID" value="ENSBTAP00000086958.1"/>
    <property type="gene ID" value="ENSBTAG00000061064.1"/>
</dbReference>
<dbReference type="GeneID" id="100295221"/>
<dbReference type="GeneID" id="104968456"/>
<dbReference type="GeneID" id="104975676"/>
<dbReference type="GeneID" id="505183"/>
<dbReference type="GeneID" id="506306"/>
<dbReference type="GeneID" id="615043"/>
<dbReference type="GeneID" id="616776"/>
<dbReference type="GeneID" id="616868"/>
<dbReference type="GeneID" id="787269"/>
<dbReference type="GeneID" id="787465"/>
<dbReference type="KEGG" id="bta:104968456"/>
<dbReference type="KEGG" id="bta:505183"/>
<dbReference type="KEGG" id="bta:615043"/>
<dbReference type="KEGG" id="bta:616776"/>
<dbReference type="KEGG" id="bta:787465"/>
<dbReference type="CTD" id="483169"/>
<dbReference type="CTD" id="8343"/>
<dbReference type="CTD" id="8344"/>
<dbReference type="CTD" id="8345"/>
<dbReference type="CTD" id="8348"/>
<dbReference type="VEuPathDB" id="HostDB:ENSBTAG00000031776"/>
<dbReference type="VEuPathDB" id="HostDB:ENSBTAG00000049598"/>
<dbReference type="VEuPathDB" id="HostDB:ENSBTAG00000052382"/>
<dbReference type="VEuPathDB" id="HostDB:ENSBTAG00000052713"/>
<dbReference type="eggNOG" id="KOG1744">
    <property type="taxonomic scope" value="Eukaryota"/>
</dbReference>
<dbReference type="GeneTree" id="ENSGT01110000267152"/>
<dbReference type="HOGENOM" id="CLU_075666_2_1_1"/>
<dbReference type="InParanoid" id="P62808"/>
<dbReference type="OMA" id="LLXGELA"/>
<dbReference type="OrthoDB" id="9802428at2759"/>
<dbReference type="TreeFam" id="TF300212"/>
<dbReference type="Reactome" id="R-BTA-110330">
    <property type="pathway name" value="Recognition and association of DNA glycosylase with site containing an affected purine"/>
</dbReference>
<dbReference type="Reactome" id="R-BTA-110331">
    <property type="pathway name" value="Cleavage of the damaged purine"/>
</dbReference>
<dbReference type="Reactome" id="R-BTA-171306">
    <property type="pathway name" value="Packaging Of Telomere Ends"/>
</dbReference>
<dbReference type="Reactome" id="R-BTA-201722">
    <property type="pathway name" value="Formation of the beta-catenin:TCF transactivating complex"/>
</dbReference>
<dbReference type="Reactome" id="R-BTA-212300">
    <property type="pathway name" value="PRC2 methylates histones and DNA"/>
</dbReference>
<dbReference type="Reactome" id="R-BTA-2299718">
    <property type="pathway name" value="Condensation of Prophase Chromosomes"/>
</dbReference>
<dbReference type="Reactome" id="R-BTA-2559580">
    <property type="pathway name" value="Oxidative Stress Induced Senescence"/>
</dbReference>
<dbReference type="Reactome" id="R-BTA-2559582">
    <property type="pathway name" value="Senescence-Associated Secretory Phenotype (SASP)"/>
</dbReference>
<dbReference type="Reactome" id="R-BTA-2559586">
    <property type="pathway name" value="DNA Damage/Telomere Stress Induced Senescence"/>
</dbReference>
<dbReference type="Reactome" id="R-BTA-3214815">
    <property type="pathway name" value="HDACs deacetylate histones"/>
</dbReference>
<dbReference type="Reactome" id="R-BTA-3214847">
    <property type="pathway name" value="HATs acetylate histones"/>
</dbReference>
<dbReference type="Reactome" id="R-BTA-427359">
    <property type="pathway name" value="SIRT1 negatively regulates rRNA expression"/>
</dbReference>
<dbReference type="Reactome" id="R-BTA-427413">
    <property type="pathway name" value="NoRC negatively regulates rRNA expression"/>
</dbReference>
<dbReference type="Reactome" id="R-BTA-5250924">
    <property type="pathway name" value="B-WICH complex positively regulates rRNA expression"/>
</dbReference>
<dbReference type="Reactome" id="R-BTA-5578749">
    <property type="pathway name" value="Transcriptional regulation by small RNAs"/>
</dbReference>
<dbReference type="Reactome" id="R-BTA-5625886">
    <property type="pathway name" value="Activated PKN1 stimulates transcription of AR (androgen receptor) regulated genes KLK2 and KLK3"/>
</dbReference>
<dbReference type="Reactome" id="R-BTA-5689880">
    <property type="pathway name" value="Ub-specific processing proteases"/>
</dbReference>
<dbReference type="Reactome" id="R-BTA-5693565">
    <property type="pathway name" value="Recruitment and ATM-mediated phosphorylation of repair and signaling proteins at DNA double strand breaks"/>
</dbReference>
<dbReference type="Reactome" id="R-BTA-5693571">
    <property type="pathway name" value="Nonhomologous End-Joining (NHEJ)"/>
</dbReference>
<dbReference type="Reactome" id="R-BTA-5693607">
    <property type="pathway name" value="Processing of DNA double-strand break ends"/>
</dbReference>
<dbReference type="Reactome" id="R-BTA-606279">
    <property type="pathway name" value="Deposition of new CENPA-containing nucleosomes at the centromere"/>
</dbReference>
<dbReference type="Reactome" id="R-BTA-68616">
    <property type="pathway name" value="Assembly of the ORC complex at the origin of replication"/>
</dbReference>
<dbReference type="Reactome" id="R-BTA-69473">
    <property type="pathway name" value="G2/M DNA damage checkpoint"/>
</dbReference>
<dbReference type="Reactome" id="R-BTA-73728">
    <property type="pathway name" value="RNA Polymerase I Promoter Opening"/>
</dbReference>
<dbReference type="Reactome" id="R-BTA-73772">
    <property type="pathway name" value="RNA Polymerase I Promoter Escape"/>
</dbReference>
<dbReference type="Reactome" id="R-BTA-8866654">
    <property type="pathway name" value="E3 ubiquitin ligases ubiquitinate target proteins"/>
</dbReference>
<dbReference type="Reactome" id="R-BTA-8936459">
    <property type="pathway name" value="RUNX1 regulates genes involved in megakaryocyte differentiation and platelet function"/>
</dbReference>
<dbReference type="Reactome" id="R-BTA-9018519">
    <property type="pathway name" value="Estrogen-dependent gene expression"/>
</dbReference>
<dbReference type="Reactome" id="R-BTA-9670095">
    <property type="pathway name" value="Inhibition of DNA recombination at telomere"/>
</dbReference>
<dbReference type="Reactome" id="R-BTA-9841922">
    <property type="pathway name" value="MLL4 and MLL3 complexes regulate expression of PPARG target genes in adipogenesis and hepatic steatosis"/>
</dbReference>
<dbReference type="Reactome" id="R-BTA-9843940">
    <property type="pathway name" value="Regulation of endogenous retroelements by KRAB-ZFP proteins"/>
</dbReference>
<dbReference type="Reactome" id="R-BTA-9843970">
    <property type="pathway name" value="Regulation of endogenous retroelements by the Human Silencing Hub (HUSH) complex"/>
</dbReference>
<dbReference type="Proteomes" id="UP000009136">
    <property type="component" value="Chromosome 23"/>
</dbReference>
<dbReference type="Proteomes" id="UP000009136">
    <property type="component" value="Chromosome 3"/>
</dbReference>
<dbReference type="Bgee" id="ENSBTAG00000031776">
    <property type="expression patterns" value="Expressed in spiral colon and 59 other cell types or tissues"/>
</dbReference>
<dbReference type="GO" id="GO:0005829">
    <property type="term" value="C:cytosol"/>
    <property type="evidence" value="ECO:0007669"/>
    <property type="project" value="Ensembl"/>
</dbReference>
<dbReference type="GO" id="GO:0005615">
    <property type="term" value="C:extracellular space"/>
    <property type="evidence" value="ECO:0007669"/>
    <property type="project" value="Ensembl"/>
</dbReference>
<dbReference type="GO" id="GO:0005654">
    <property type="term" value="C:nucleoplasm"/>
    <property type="evidence" value="ECO:0007669"/>
    <property type="project" value="Ensembl"/>
</dbReference>
<dbReference type="GO" id="GO:0000786">
    <property type="term" value="C:nucleosome"/>
    <property type="evidence" value="ECO:0007669"/>
    <property type="project" value="UniProtKB-KW"/>
</dbReference>
<dbReference type="GO" id="GO:0003677">
    <property type="term" value="F:DNA binding"/>
    <property type="evidence" value="ECO:0007669"/>
    <property type="project" value="UniProtKB-KW"/>
</dbReference>
<dbReference type="GO" id="GO:0042802">
    <property type="term" value="F:identical protein binding"/>
    <property type="evidence" value="ECO:0007669"/>
    <property type="project" value="Ensembl"/>
</dbReference>
<dbReference type="GO" id="GO:0046982">
    <property type="term" value="F:protein heterodimerization activity"/>
    <property type="evidence" value="ECO:0007669"/>
    <property type="project" value="InterPro"/>
</dbReference>
<dbReference type="GO" id="GO:0030527">
    <property type="term" value="F:structural constituent of chromatin"/>
    <property type="evidence" value="ECO:0007669"/>
    <property type="project" value="InterPro"/>
</dbReference>
<dbReference type="GO" id="GO:0019731">
    <property type="term" value="P:antibacterial humoral response"/>
    <property type="evidence" value="ECO:0007669"/>
    <property type="project" value="Ensembl"/>
</dbReference>
<dbReference type="GO" id="GO:0061844">
    <property type="term" value="P:antimicrobial humoral immune response mediated by antimicrobial peptide"/>
    <property type="evidence" value="ECO:0007669"/>
    <property type="project" value="Ensembl"/>
</dbReference>
<dbReference type="GO" id="GO:0050830">
    <property type="term" value="P:defense response to Gram-positive bacterium"/>
    <property type="evidence" value="ECO:0007669"/>
    <property type="project" value="Ensembl"/>
</dbReference>
<dbReference type="GO" id="GO:0002227">
    <property type="term" value="P:innate immune response in mucosa"/>
    <property type="evidence" value="ECO:0007669"/>
    <property type="project" value="Ensembl"/>
</dbReference>
<dbReference type="CDD" id="cd22910">
    <property type="entry name" value="HFD_H2B"/>
    <property type="match status" value="1"/>
</dbReference>
<dbReference type="FunFam" id="1.10.20.10:FF:000003">
    <property type="entry name" value="Histone H2B"/>
    <property type="match status" value="1"/>
</dbReference>
<dbReference type="Gene3D" id="1.10.20.10">
    <property type="entry name" value="Histone, subunit A"/>
    <property type="match status" value="1"/>
</dbReference>
<dbReference type="InterPro" id="IPR009072">
    <property type="entry name" value="Histone-fold"/>
</dbReference>
<dbReference type="InterPro" id="IPR007125">
    <property type="entry name" value="Histone_H2A/H2B/H3"/>
</dbReference>
<dbReference type="InterPro" id="IPR000558">
    <property type="entry name" value="Histone_H2B"/>
</dbReference>
<dbReference type="InterPro" id="IPR055333">
    <property type="entry name" value="HISTONE_H2B_site"/>
</dbReference>
<dbReference type="PANTHER" id="PTHR23428">
    <property type="entry name" value="HISTONE H2B"/>
    <property type="match status" value="1"/>
</dbReference>
<dbReference type="Pfam" id="PF00125">
    <property type="entry name" value="Histone"/>
    <property type="match status" value="1"/>
</dbReference>
<dbReference type="PRINTS" id="PR00621">
    <property type="entry name" value="HISTONEH2B"/>
</dbReference>
<dbReference type="SMART" id="SM00427">
    <property type="entry name" value="H2B"/>
    <property type="match status" value="1"/>
</dbReference>
<dbReference type="SUPFAM" id="SSF47113">
    <property type="entry name" value="Histone-fold"/>
    <property type="match status" value="1"/>
</dbReference>
<dbReference type="PROSITE" id="PS00357">
    <property type="entry name" value="HISTONE_H2B"/>
    <property type="match status" value="1"/>
</dbReference>
<comment type="function">
    <text>Core component of nucleosome. Nucleosomes wrap and compact DNA into chromatin, limiting DNA accessibility to the cellular machineries which require DNA as a template. Histones thereby play a central role in transcription regulation, DNA repair, DNA replication and chromosomal stability. DNA accessibility is regulated via a complex set of post-translational modifications of histones, also called histone code, and nucleosome remodeling.</text>
</comment>
<comment type="subunit">
    <text>The nucleosome is a histone octamer containing two molecules each of H2A, H2B, H3 and H4 assembled in one H3-H4 heterotetramer and two H2A-H2B heterodimers. The octamer wraps approximately 147 bp of DNA.</text>
</comment>
<comment type="subcellular location">
    <subcellularLocation>
        <location>Nucleus</location>
    </subcellularLocation>
    <subcellularLocation>
        <location>Chromosome</location>
    </subcellularLocation>
</comment>
<comment type="PTM">
    <text evidence="2">Monoubiquitination at Lys-35 (H2BK34Ub) by the MSL1/MSL2 dimer is required for histone H3 'Lys-4' (H3K4me) and 'Lys-79' (H3K79me) methylation and transcription activation at specific gene loci, such as HOXA9 and MEIS1 loci. Similarly, monoubiquitination at Lys-121 (H2BK120Ub) by the RNF20/40 complex gives a specific tag for epigenetic transcriptional activation and is also prerequisite for histone H3 'Lys-4' and 'Lys-79' methylation. It also functions cooperatively with the FACT dimer to stimulate elongation by RNA polymerase II. H2BK120Ub also acts as a regulator of mRNA splicing: deubiquitination by USP49 is required for efficient cotranscriptional splicing of a large set of exons (By similarity).</text>
</comment>
<comment type="PTM">
    <text evidence="2 8">Phosphorylated on Ser-15 (H2BS14ph) by STK4/MST1 during apoptosis; which facilitates apoptotic chromatin condensation. Also phosphorylated on Ser-15 in response to DNA double strand breaks (DSBs), and in correlation with somatic hypermutation and immunoglobulin class-switch recombination. Phosphorylation at Ser-37 (H2BS36ph) by AMPK in response to stress promotes transcription (By similarity).</text>
</comment>
<comment type="PTM">
    <text evidence="4">GlcNAcylation at Ser-113 promotes monoubiquitination of Lys-121. It fluctuates in response to extracellular glucose, and associates with transcribed genes (By similarity).</text>
</comment>
<comment type="PTM">
    <text evidence="2 9">ADP-ribosylated by PARP1 or PARP2 on Ser-7 (H2BS6ADPr) in response to DNA damage (By similarity). H2BS6ADPr promotes recruitment of CHD1L (By similarity). Mono-ADP-ribosylated on Glu-3 (H2BE2ADPr) by PARP3 in response to single-strand breaks (By similarity). Poly ADP-ribosylation on Glu-36 (H2BE35ADPr) by PARP1 regulates adipogenesis: it inhibits phosphorylation at Ser-37 (H2BS36ph), thereby blocking expression of pro-adipogenetic genes (By similarity).</text>
</comment>
<comment type="PTM">
    <text evidence="2">Crotonylation (Kcr) is specifically present in male germ cells and marks testis-specific genes in post-meiotic cells, including X-linked genes that escape sex chromosome inactivation in haploid cells. Crotonylation marks active promoters and enhancers and confers resistance to transcriptional repressors. It is also associated with post-meiotically activated genes on autosomes (By similarity).</text>
</comment>
<comment type="PTM">
    <text evidence="2">Lactylated in macrophages by EP300/P300 by using lactoyl-CoA directly derived from endogenous or exogenous lactate, leading to stimulates gene transcription.</text>
</comment>
<comment type="similarity">
    <text evidence="15">Belongs to the histone H2B family.</text>
</comment>
<reference key="1">
    <citation type="journal article" date="2005" name="BMC Genomics">
        <title>Characterization of 954 bovine full-CDS cDNA sequences.</title>
        <authorList>
            <person name="Harhay G.P."/>
            <person name="Sonstegard T.S."/>
            <person name="Keele J.W."/>
            <person name="Heaton M.P."/>
            <person name="Clawson M.L."/>
            <person name="Snelling W.M."/>
            <person name="Wiedmann R.T."/>
            <person name="Van Tassell C.P."/>
            <person name="Smith T.P.L."/>
        </authorList>
    </citation>
    <scope>NUCLEOTIDE SEQUENCE [LARGE SCALE MRNA]</scope>
</reference>
<reference key="2">
    <citation type="submission" date="2007-06" db="EMBL/GenBank/DDBJ databases">
        <authorList>
            <consortium name="NIH - Mammalian Gene Collection (MGC) project"/>
        </authorList>
    </citation>
    <scope>NUCLEOTIDE SEQUENCE [LARGE SCALE MRNA]</scope>
    <source>
        <strain>Crossbred X Angus</strain>
        <strain>Hereford</strain>
        <tissue>Liver</tissue>
        <tissue>Thymus</tissue>
    </source>
</reference>
<reference key="3">
    <citation type="journal article" date="1972" name="J. Biochem.">
        <title>Calf thymus lysine- and serine-rich histone. 3. Complete amino acid sequence and its implication for interactions of histones with DNA.</title>
        <authorList>
            <person name="Iwai K."/>
            <person name="Hayashi H."/>
            <person name="Ishikawa K."/>
        </authorList>
    </citation>
    <scope>PROTEIN SEQUENCE OF 2-126</scope>
</reference>
<reference key="4">
    <citation type="journal article" date="1984" name="Proc. Natl. Acad. Sci. U.S.A.">
        <title>Purification of bovine bone morphogenetic protein by hydroxyapatite chromatography.</title>
        <authorList>
            <person name="Urist M.R."/>
            <person name="Huo Y.K."/>
            <person name="Brownell A.G."/>
            <person name="Hohl W.M."/>
            <person name="Buyske J."/>
            <person name="Lietze A."/>
            <person name="Tempst P."/>
            <person name="Hunkapiller M."/>
            <person name="DeLange R.J."/>
        </authorList>
    </citation>
    <scope>PROTEIN SEQUENCE OF 2-26</scope>
</reference>
<reference key="5">
    <citation type="journal article" date="2003" name="J. Biol. Chem.">
        <title>Somatic histones are components of the perinuclear theca in bovine spermatozoa.</title>
        <authorList>
            <person name="Tovich P.R."/>
            <person name="Oko R.J."/>
        </authorList>
    </citation>
    <scope>PROTEIN SEQUENCE OF 2-20</scope>
</reference>
<reference key="6">
    <citation type="journal article" date="1989" name="Biochemistry">
        <title>Ubiquitinated histone H2B is preferentially located in transcriptionally active chromatin.</title>
        <authorList>
            <person name="Nickel B.E."/>
            <person name="Allis C.D."/>
            <person name="Davie J.R."/>
        </authorList>
    </citation>
    <scope>UBIQUITINATION</scope>
</reference>
<feature type="initiator methionine" description="Removed" evidence="1 12 13 14">
    <location>
        <position position="1"/>
    </location>
</feature>
<feature type="chain" id="PRO_0000071825" description="Histone H2B type 1">
    <location>
        <begin position="2"/>
        <end position="126"/>
    </location>
</feature>
<feature type="region of interest" description="Disordered" evidence="11">
    <location>
        <begin position="1"/>
        <end position="36"/>
    </location>
</feature>
<feature type="compositionally biased region" description="Low complexity" evidence="11">
    <location>
        <begin position="1"/>
        <end position="12"/>
    </location>
</feature>
<feature type="modified residue" description="N-acetylproline" evidence="1">
    <location>
        <position position="2"/>
    </location>
</feature>
<feature type="modified residue" description="ADP-ribosyl glutamic acid" evidence="2">
    <location>
        <position position="3"/>
    </location>
</feature>
<feature type="modified residue" description="N6-(2-hydroxyisobutyryl)lysine; alternate" evidence="2">
    <location>
        <position position="6"/>
    </location>
</feature>
<feature type="modified residue" description="N6-(beta-hydroxybutyryl)lysine; alternate" evidence="8">
    <location>
        <position position="6"/>
    </location>
</feature>
<feature type="modified residue" description="N6-acetyllysine; alternate" evidence="5">
    <location>
        <position position="6"/>
    </location>
</feature>
<feature type="modified residue" description="N6-butyryllysine; alternate" evidence="2">
    <location>
        <position position="6"/>
    </location>
</feature>
<feature type="modified residue" description="N6-crotonyllysine; alternate" evidence="2">
    <location>
        <position position="6"/>
    </location>
</feature>
<feature type="modified residue" description="N6-lactoyllysine; alternate" evidence="2">
    <location>
        <position position="6"/>
    </location>
</feature>
<feature type="modified residue" description="ADP-ribosylserine" evidence="2">
    <location>
        <position position="7"/>
    </location>
</feature>
<feature type="modified residue" description="N6-(beta-hydroxybutyryl)lysine; alternate" evidence="8">
    <location>
        <position position="12"/>
    </location>
</feature>
<feature type="modified residue" description="N6-acetyllysine; alternate" evidence="4">
    <location>
        <position position="12"/>
    </location>
</feature>
<feature type="modified residue" description="N6-crotonyllysine; alternate" evidence="2">
    <location>
        <position position="12"/>
    </location>
</feature>
<feature type="modified residue" description="N6-lactoyllysine; alternate" evidence="2">
    <location>
        <position position="12"/>
    </location>
</feature>
<feature type="modified residue" description="N6-(2-hydroxyisobutyryl)lysine; alternate" evidence="2">
    <location>
        <position position="13"/>
    </location>
</feature>
<feature type="modified residue" description="N6-acetyllysine; alternate" evidence="5">
    <location>
        <position position="13"/>
    </location>
</feature>
<feature type="modified residue" description="N6-crotonyllysine; alternate" evidence="2">
    <location>
        <position position="13"/>
    </location>
</feature>
<feature type="modified residue" description="Phosphoserine; by STK4/MST1" evidence="2">
    <location>
        <position position="15"/>
    </location>
</feature>
<feature type="modified residue" description="N6-acetyllysine; alternate" evidence="5">
    <location>
        <position position="16"/>
    </location>
</feature>
<feature type="modified residue" description="N6-crotonyllysine; alternate" evidence="2">
    <location>
        <position position="16"/>
    </location>
</feature>
<feature type="modified residue" description="N6-lactoyllysine; alternate" evidence="2">
    <location>
        <position position="16"/>
    </location>
</feature>
<feature type="modified residue" description="N6-acetyllysine; alternate" evidence="2">
    <location>
        <position position="17"/>
    </location>
</feature>
<feature type="modified residue" description="N6-crotonyllysine; alternate" evidence="2">
    <location>
        <position position="17"/>
    </location>
</feature>
<feature type="modified residue" description="N6-glutaryllysine; alternate" evidence="2">
    <location>
        <position position="17"/>
    </location>
</feature>
<feature type="modified residue" description="N6-lactoyllysine; alternate" evidence="2">
    <location>
        <position position="17"/>
    </location>
</feature>
<feature type="modified residue" description="N6-(2-hydroxyisobutyryl)lysine; alternate" evidence="2">
    <location>
        <position position="21"/>
    </location>
</feature>
<feature type="modified residue" description="N6-(beta-hydroxybutyryl)lysine; alternate" evidence="8">
    <location>
        <position position="21"/>
    </location>
</feature>
<feature type="modified residue" description="N6-acetyllysine; alternate" evidence="5">
    <location>
        <position position="21"/>
    </location>
</feature>
<feature type="modified residue" description="N6-butyryllysine; alternate" evidence="2">
    <location>
        <position position="21"/>
    </location>
</feature>
<feature type="modified residue" description="N6-crotonyllysine; alternate" evidence="2">
    <location>
        <position position="21"/>
    </location>
</feature>
<feature type="modified residue" description="N6-lactoyllysine; alternate" evidence="2">
    <location>
        <position position="21"/>
    </location>
</feature>
<feature type="modified residue" description="N6-(2-hydroxyisobutyryl)lysine; alternate" evidence="2">
    <location>
        <position position="24"/>
    </location>
</feature>
<feature type="modified residue" description="N6-acetyllysine; alternate" evidence="2">
    <location>
        <position position="24"/>
    </location>
</feature>
<feature type="modified residue" description="N6-crotonyllysine; alternate" evidence="2">
    <location>
        <position position="24"/>
    </location>
</feature>
<feature type="modified residue" description="N6-lactoyllysine; alternate" evidence="2">
    <location>
        <position position="24"/>
    </location>
</feature>
<feature type="modified residue" description="N6-(2-hydroxyisobutyryl)lysine" evidence="2">
    <location>
        <position position="25"/>
    </location>
</feature>
<feature type="modified residue" description="N6-(2-hydroxyisobutyryl)lysine; alternate" evidence="2">
    <location>
        <position position="35"/>
    </location>
</feature>
<feature type="modified residue" description="N6-(beta-hydroxybutyryl)lysine; alternate" evidence="8">
    <location>
        <position position="35"/>
    </location>
</feature>
<feature type="modified residue" description="N6-crotonyllysine; alternate" evidence="2">
    <location>
        <position position="35"/>
    </location>
</feature>
<feature type="modified residue" description="N6-glutaryllysine; alternate" evidence="2">
    <location>
        <position position="35"/>
    </location>
</feature>
<feature type="modified residue" description="N6-succinyllysine; alternate" evidence="2">
    <location>
        <position position="35"/>
    </location>
</feature>
<feature type="modified residue" description="PolyADP-ribosyl glutamic acid" evidence="8">
    <location>
        <position position="36"/>
    </location>
</feature>
<feature type="modified residue" description="Phosphoserine; by AMPK" evidence="8">
    <location>
        <position position="37"/>
    </location>
</feature>
<feature type="modified residue" description="N6-(2-hydroxyisobutyryl)lysine; alternate" evidence="2">
    <location>
        <position position="44"/>
    </location>
</feature>
<feature type="modified residue" description="N6-glutaryllysine; alternate" evidence="2">
    <location>
        <position position="44"/>
    </location>
</feature>
<feature type="modified residue" description="N6-lactoyllysine; alternate" evidence="2">
    <location>
        <position position="44"/>
    </location>
</feature>
<feature type="modified residue" description="N6-(2-hydroxyisobutyryl)lysine; alternate" evidence="2">
    <location>
        <position position="47"/>
    </location>
</feature>
<feature type="modified residue" description="N6-glutaryllysine; alternate" evidence="2">
    <location>
        <position position="47"/>
    </location>
</feature>
<feature type="modified residue" description="N6-methyllysine; alternate" evidence="4">
    <location>
        <position position="47"/>
    </location>
</feature>
<feature type="modified residue" description="N6,N6-dimethyllysine; alternate" evidence="4">
    <location>
        <position position="58"/>
    </location>
</feature>
<feature type="modified residue" description="N6-(2-hydroxyisobutyryl)lysine; alternate" evidence="2">
    <location>
        <position position="58"/>
    </location>
</feature>
<feature type="modified residue" description="Dimethylated arginine" evidence="10">
    <location>
        <position position="80"/>
    </location>
</feature>
<feature type="modified residue" description="N6,N6,N6-trimethyllysine; alternate" evidence="10">
    <location>
        <position position="86"/>
    </location>
</feature>
<feature type="modified residue" description="N6-(2-hydroxyisobutyryl)lysine; alternate" evidence="2">
    <location>
        <position position="86"/>
    </location>
</feature>
<feature type="modified residue" description="N6-acetyllysine; alternate" evidence="10">
    <location>
        <position position="86"/>
    </location>
</feature>
<feature type="modified residue" description="N6-lactoyllysine; alternate" evidence="2">
    <location>
        <position position="86"/>
    </location>
</feature>
<feature type="modified residue" description="Omega-N-methylarginine" evidence="10">
    <location>
        <position position="87"/>
    </location>
</feature>
<feature type="modified residue" description="Omega-N-methylarginine" evidence="10">
    <location>
        <position position="93"/>
    </location>
</feature>
<feature type="modified residue" description="N6-(2-hydroxyisobutyryl)lysine; alternate" evidence="2">
    <location>
        <position position="109"/>
    </location>
</feature>
<feature type="modified residue" description="N6-glutaryllysine; alternate" evidence="2">
    <location>
        <position position="109"/>
    </location>
</feature>
<feature type="modified residue" description="N6-lactoyllysine; alternate" evidence="2">
    <location>
        <position position="109"/>
    </location>
</feature>
<feature type="modified residue" description="N6-methyllysine; alternate" evidence="4">
    <location>
        <position position="109"/>
    </location>
</feature>
<feature type="modified residue" description="Phosphothreonine" evidence="6">
    <location>
        <position position="116"/>
    </location>
</feature>
<feature type="modified residue" description="N6-(2-hydroxyisobutyryl)lysine; alternate" evidence="2">
    <location>
        <position position="117"/>
    </location>
</feature>
<feature type="modified residue" description="N6-(beta-hydroxybutyryl)lysine; alternate" evidence="8">
    <location>
        <position position="117"/>
    </location>
</feature>
<feature type="modified residue" description="N6-glutaryllysine; alternate" evidence="2">
    <location>
        <position position="117"/>
    </location>
</feature>
<feature type="modified residue" description="N6-lactoyllysine; alternate" evidence="2">
    <location>
        <position position="117"/>
    </location>
</feature>
<feature type="modified residue" description="N6-methylated lysine; alternate" evidence="6">
    <location>
        <position position="117"/>
    </location>
</feature>
<feature type="modified residue" description="N6-succinyllysine; alternate" evidence="2">
    <location>
        <position position="117"/>
    </location>
</feature>
<feature type="modified residue" description="N6-(2-hydroxyisobutyryl)lysine; alternate" evidence="2">
    <location>
        <position position="121"/>
    </location>
</feature>
<feature type="modified residue" description="N6-glutaryllysine; alternate" evidence="2">
    <location>
        <position position="121"/>
    </location>
</feature>
<feature type="modified residue" description="N6-lactoyllysine; alternate" evidence="2">
    <location>
        <position position="121"/>
    </location>
</feature>
<feature type="modified residue" description="N6-succinyllysine; alternate" evidence="2">
    <location>
        <position position="121"/>
    </location>
</feature>
<feature type="glycosylation site" description="O-linked (GlcNAc) serine" evidence="4">
    <location>
        <position position="113"/>
    </location>
</feature>
<feature type="cross-link" description="Glycyl lysine isopeptide (Lys-Gly) (interchain with G-Cter in SUMO2); alternate" evidence="3">
    <location>
        <position position="6"/>
    </location>
</feature>
<feature type="cross-link" description="Glycyl lysine isopeptide (Lys-Gly) (interchain with G-Cter in SUMO2); alternate" evidence="7">
    <location>
        <position position="21"/>
    </location>
</feature>
<feature type="cross-link" description="Glycyl lysine isopeptide (Lys-Gly) (interchain with G-Cter in ubiquitin); alternate" evidence="2">
    <location>
        <position position="35"/>
    </location>
</feature>
<feature type="cross-link" description="Glycyl lysine isopeptide (Lys-Gly) (interchain with G-Cter in ubiquitin); alternate" evidence="16">
    <location>
        <position position="121"/>
    </location>
</feature>
<feature type="sequence conflict" description="In Ref. 4; AA sequence." evidence="15" ref="4">
    <original>K</original>
    <variation>T</variation>
    <location>
        <position position="21"/>
    </location>
</feature>
<name>H2B1_BOVIN</name>
<protein>
    <recommendedName>
        <fullName>Histone H2B type 1</fullName>
    </recommendedName>
</protein>
<proteinExistence type="evidence at protein level"/>
<accession>P62808</accession>
<accession>A1L599</accession>
<accession>A5PJG5</accession>
<accession>P02278</accession>
<accession>Q32PE8</accession>
<evidence type="ECO:0000250" key="1">
    <source>
        <dbReference type="UniProtKB" id="P23527"/>
    </source>
</evidence>
<evidence type="ECO:0000250" key="2">
    <source>
        <dbReference type="UniProtKB" id="P33778"/>
    </source>
</evidence>
<evidence type="ECO:0000250" key="3">
    <source>
        <dbReference type="UniProtKB" id="P58876"/>
    </source>
</evidence>
<evidence type="ECO:0000250" key="4">
    <source>
        <dbReference type="UniProtKB" id="P62807"/>
    </source>
</evidence>
<evidence type="ECO:0000250" key="5">
    <source>
        <dbReference type="UniProtKB" id="Q00715"/>
    </source>
</evidence>
<evidence type="ECO:0000250" key="6">
    <source>
        <dbReference type="UniProtKB" id="Q00729"/>
    </source>
</evidence>
<evidence type="ECO:0000250" key="7">
    <source>
        <dbReference type="UniProtKB" id="Q5QNW6"/>
    </source>
</evidence>
<evidence type="ECO:0000250" key="8">
    <source>
        <dbReference type="UniProtKB" id="Q64475"/>
    </source>
</evidence>
<evidence type="ECO:0000250" key="9">
    <source>
        <dbReference type="UniProtKB" id="Q6ZWY9"/>
    </source>
</evidence>
<evidence type="ECO:0000250" key="10">
    <source>
        <dbReference type="UniProtKB" id="Q96A08"/>
    </source>
</evidence>
<evidence type="ECO:0000256" key="11">
    <source>
        <dbReference type="SAM" id="MobiDB-lite"/>
    </source>
</evidence>
<evidence type="ECO:0000269" key="12">
    <source>
    </source>
</evidence>
<evidence type="ECO:0000269" key="13">
    <source>
    </source>
</evidence>
<evidence type="ECO:0000269" key="14">
    <source>
    </source>
</evidence>
<evidence type="ECO:0000305" key="15"/>
<evidence type="ECO:0000305" key="16">
    <source>
    </source>
</evidence>
<organism>
    <name type="scientific">Bos taurus</name>
    <name type="common">Bovine</name>
    <dbReference type="NCBI Taxonomy" id="9913"/>
    <lineage>
        <taxon>Eukaryota</taxon>
        <taxon>Metazoa</taxon>
        <taxon>Chordata</taxon>
        <taxon>Craniata</taxon>
        <taxon>Vertebrata</taxon>
        <taxon>Euteleostomi</taxon>
        <taxon>Mammalia</taxon>
        <taxon>Eutheria</taxon>
        <taxon>Laurasiatheria</taxon>
        <taxon>Artiodactyla</taxon>
        <taxon>Ruminantia</taxon>
        <taxon>Pecora</taxon>
        <taxon>Bovidae</taxon>
        <taxon>Bovinae</taxon>
        <taxon>Bos</taxon>
    </lineage>
</organism>
<keyword id="KW-0007">Acetylation</keyword>
<keyword id="KW-0013">ADP-ribosylation</keyword>
<keyword id="KW-0158">Chromosome</keyword>
<keyword id="KW-0903">Direct protein sequencing</keyword>
<keyword id="KW-0238">DNA-binding</keyword>
<keyword id="KW-0325">Glycoprotein</keyword>
<keyword id="KW-0379">Hydroxylation</keyword>
<keyword id="KW-1017">Isopeptide bond</keyword>
<keyword id="KW-0488">Methylation</keyword>
<keyword id="KW-0544">Nucleosome core</keyword>
<keyword id="KW-0539">Nucleus</keyword>
<keyword id="KW-0597">Phosphoprotein</keyword>
<keyword id="KW-1185">Reference proteome</keyword>
<keyword id="KW-0832">Ubl conjugation</keyword>
<sequence length="126" mass="13906">MPEPAKSAPAPKKGSKKAVTKAQKKDGKKRKRSRKESYSVYVYKVLKQVHPDTGISSKAMGIMNSFVNDIFERIAGEASRLAHYNKRSTITSREIQTAVRLLLPGELAKHAVSEGTKAVTKYTSSK</sequence>